<proteinExistence type="inferred from homology"/>
<comment type="function">
    <text evidence="1">Required for rescue of stalled ribosomes mediated by trans-translation. Binds to transfer-messenger RNA (tmRNA), required for stable association of tmRNA with ribosomes. tmRNA and SmpB together mimic tRNA shape, replacing the anticodon stem-loop with SmpB. tmRNA is encoded by the ssrA gene; the 2 termini fold to resemble tRNA(Ala) and it encodes a 'tag peptide', a short internal open reading frame. During trans-translation Ala-aminoacylated tmRNA acts like a tRNA, entering the A-site of stalled ribosomes, displacing the stalled mRNA. The ribosome then switches to translate the ORF on the tmRNA; the nascent peptide is terminated with the 'tag peptide' encoded by the tmRNA and targeted for degradation. The ribosome is freed to recommence translation, which seems to be the essential function of trans-translation.</text>
</comment>
<comment type="subcellular location">
    <subcellularLocation>
        <location evidence="1">Cytoplasm</location>
    </subcellularLocation>
    <text evidence="1">The tmRNA-SmpB complex associates with stalled 70S ribosomes.</text>
</comment>
<comment type="similarity">
    <text evidence="1">Belongs to the SmpB family.</text>
</comment>
<dbReference type="EMBL" id="AP008981">
    <property type="protein sequence ID" value="BAG39542.1"/>
    <property type="molecule type" value="Genomic_DNA"/>
</dbReference>
<dbReference type="RefSeq" id="WP_012460806.1">
    <property type="nucleotide sequence ID" value="NC_010793.1"/>
</dbReference>
<dbReference type="SMR" id="B3CQP3"/>
<dbReference type="KEGG" id="ott:OTT_0084"/>
<dbReference type="HOGENOM" id="CLU_108953_0_0_5"/>
<dbReference type="OrthoDB" id="9805462at2"/>
<dbReference type="Proteomes" id="UP000001033">
    <property type="component" value="Chromosome"/>
</dbReference>
<dbReference type="GO" id="GO:0005829">
    <property type="term" value="C:cytosol"/>
    <property type="evidence" value="ECO:0007669"/>
    <property type="project" value="TreeGrafter"/>
</dbReference>
<dbReference type="GO" id="GO:0003723">
    <property type="term" value="F:RNA binding"/>
    <property type="evidence" value="ECO:0007669"/>
    <property type="project" value="UniProtKB-UniRule"/>
</dbReference>
<dbReference type="GO" id="GO:0070929">
    <property type="term" value="P:trans-translation"/>
    <property type="evidence" value="ECO:0007669"/>
    <property type="project" value="UniProtKB-UniRule"/>
</dbReference>
<dbReference type="CDD" id="cd09294">
    <property type="entry name" value="SmpB"/>
    <property type="match status" value="1"/>
</dbReference>
<dbReference type="Gene3D" id="2.40.280.10">
    <property type="match status" value="1"/>
</dbReference>
<dbReference type="HAMAP" id="MF_00023">
    <property type="entry name" value="SmpB"/>
    <property type="match status" value="1"/>
</dbReference>
<dbReference type="InterPro" id="IPR023620">
    <property type="entry name" value="SmpB"/>
</dbReference>
<dbReference type="InterPro" id="IPR000037">
    <property type="entry name" value="SsrA-bd_prot"/>
</dbReference>
<dbReference type="InterPro" id="IPR020081">
    <property type="entry name" value="SsrA-bd_prot_CS"/>
</dbReference>
<dbReference type="NCBIfam" id="NF003843">
    <property type="entry name" value="PRK05422.1"/>
    <property type="match status" value="1"/>
</dbReference>
<dbReference type="NCBIfam" id="TIGR00086">
    <property type="entry name" value="smpB"/>
    <property type="match status" value="1"/>
</dbReference>
<dbReference type="PANTHER" id="PTHR30308:SF2">
    <property type="entry name" value="SSRA-BINDING PROTEIN"/>
    <property type="match status" value="1"/>
</dbReference>
<dbReference type="PANTHER" id="PTHR30308">
    <property type="entry name" value="TMRNA-BINDING COMPONENT OF TRANS-TRANSLATION TAGGING COMPLEX"/>
    <property type="match status" value="1"/>
</dbReference>
<dbReference type="Pfam" id="PF01668">
    <property type="entry name" value="SmpB"/>
    <property type="match status" value="1"/>
</dbReference>
<dbReference type="SUPFAM" id="SSF74982">
    <property type="entry name" value="Small protein B (SmpB)"/>
    <property type="match status" value="1"/>
</dbReference>
<dbReference type="PROSITE" id="PS01317">
    <property type="entry name" value="SSRP"/>
    <property type="match status" value="1"/>
</dbReference>
<organism>
    <name type="scientific">Orientia tsutsugamushi (strain Ikeda)</name>
    <name type="common">Rickettsia tsutsugamushi</name>
    <dbReference type="NCBI Taxonomy" id="334380"/>
    <lineage>
        <taxon>Bacteria</taxon>
        <taxon>Pseudomonadati</taxon>
        <taxon>Pseudomonadota</taxon>
        <taxon>Alphaproteobacteria</taxon>
        <taxon>Rickettsiales</taxon>
        <taxon>Rickettsiaceae</taxon>
        <taxon>Rickettsieae</taxon>
        <taxon>Orientia</taxon>
    </lineage>
</organism>
<feature type="chain" id="PRO_1000090171" description="SsrA-binding protein">
    <location>
        <begin position="1"/>
        <end position="153"/>
    </location>
</feature>
<name>SSRP_ORITI</name>
<gene>
    <name evidence="1" type="primary">smpB</name>
    <name type="ordered locus">OTT_0084</name>
</gene>
<protein>
    <recommendedName>
        <fullName evidence="1">SsrA-binding protein</fullName>
    </recommendedName>
    <alternativeName>
        <fullName evidence="1">Small protein B</fullName>
    </alternativeName>
</protein>
<accession>B3CQP3</accession>
<reference key="1">
    <citation type="journal article" date="2008" name="DNA Res.">
        <title>The whole-genome sequencing of the obligate intracellular bacterium Orientia tsutsugamushi revealed massive gene amplification during reductive genome evolution.</title>
        <authorList>
            <person name="Nakayama K."/>
            <person name="Yamashita A."/>
            <person name="Kurokawa K."/>
            <person name="Morimoto T."/>
            <person name="Ogawa M."/>
            <person name="Fukuhara M."/>
            <person name="Urakami H."/>
            <person name="Ohnishi M."/>
            <person name="Uchiyama I."/>
            <person name="Ogura Y."/>
            <person name="Ooka T."/>
            <person name="Oshima K."/>
            <person name="Tamura A."/>
            <person name="Hattori M."/>
            <person name="Hayashi T."/>
        </authorList>
    </citation>
    <scope>NUCLEOTIDE SEQUENCE [LARGE SCALE GENOMIC DNA]</scope>
    <source>
        <strain>Ikeda</strain>
    </source>
</reference>
<sequence length="153" mass="17932">MENYCKIVAQNRKAKFNYFIEDKMEAGIVLQGSELKSIRSGKVSIEDSYAAESSNEIFLYNSYIGEYKQANRFNHVPRRVRKLLLHRKEIQKIIGKLSVQGCTLVALSIYFNSKNKVKVELGLAKGKKQYDKRYAIKEQEWKKQQARIMRNKF</sequence>
<keyword id="KW-0963">Cytoplasm</keyword>
<keyword id="KW-0694">RNA-binding</keyword>
<evidence type="ECO:0000255" key="1">
    <source>
        <dbReference type="HAMAP-Rule" id="MF_00023"/>
    </source>
</evidence>